<comment type="similarity">
    <text evidence="1">Belongs to the UPF0598 family.</text>
</comment>
<evidence type="ECO:0000305" key="1"/>
<sequence>MILTFARSLYTQGQYNGKIREYFYYVSHNGFLFLDDSRMKNFTAAYKDIQFLNFFYRKIKENKTGRYEDTFPWVSLCGIERNFLRCDDTPLVYTELDSTEKELRIGQSTIYHSFQPSSLSMNSSGRVYHKCPIGGKALVADKLTDKLYRRFRFDDDGVPVGFQCGEQIIELKK</sequence>
<reference key="1">
    <citation type="journal article" date="1998" name="Science">
        <title>Genome sequence of the nematode C. elegans: a platform for investigating biology.</title>
        <authorList>
            <consortium name="The C. elegans sequencing consortium"/>
        </authorList>
    </citation>
    <scope>NUCLEOTIDE SEQUENCE [LARGE SCALE GENOMIC DNA]</scope>
    <source>
        <strain>Bristol N2</strain>
    </source>
</reference>
<organism>
    <name type="scientific">Caenorhabditis elegans</name>
    <dbReference type="NCBI Taxonomy" id="6239"/>
    <lineage>
        <taxon>Eukaryota</taxon>
        <taxon>Metazoa</taxon>
        <taxon>Ecdysozoa</taxon>
        <taxon>Nematoda</taxon>
        <taxon>Chromadorea</taxon>
        <taxon>Rhabditida</taxon>
        <taxon>Rhabditina</taxon>
        <taxon>Rhabditomorpha</taxon>
        <taxon>Rhabditoidea</taxon>
        <taxon>Rhabditidae</taxon>
        <taxon>Peloderinae</taxon>
        <taxon>Caenorhabditis</taxon>
    </lineage>
</organism>
<feature type="chain" id="PRO_0000340672" description="UPF0598 protein F59C6.12">
    <location>
        <begin position="1"/>
        <end position="173"/>
    </location>
</feature>
<proteinExistence type="inferred from homology"/>
<accession>Q564X7</accession>
<gene>
    <name type="ORF">F59C6.12</name>
</gene>
<keyword id="KW-1185">Reference proteome</keyword>
<protein>
    <recommendedName>
        <fullName>UPF0598 protein F59C6.12</fullName>
    </recommendedName>
</protein>
<name>U598_CAEEL</name>
<dbReference type="EMBL" id="Z79600">
    <property type="protein sequence ID" value="CAI79194.1"/>
    <property type="molecule type" value="Genomic_DNA"/>
</dbReference>
<dbReference type="RefSeq" id="NP_001021522.1">
    <property type="nucleotide sequence ID" value="NM_001026351.3"/>
</dbReference>
<dbReference type="SMR" id="Q564X7"/>
<dbReference type="BioGRID" id="533219">
    <property type="interactions" value="4"/>
</dbReference>
<dbReference type="FunCoup" id="Q564X7">
    <property type="interactions" value="317"/>
</dbReference>
<dbReference type="STRING" id="6239.F59C6.12.1"/>
<dbReference type="PaxDb" id="6239-F59C6.12"/>
<dbReference type="PeptideAtlas" id="Q564X7"/>
<dbReference type="EnsemblMetazoa" id="F59C6.12.1">
    <property type="protein sequence ID" value="F59C6.12.1"/>
    <property type="gene ID" value="WBGene00044251"/>
</dbReference>
<dbReference type="GeneID" id="3565901"/>
<dbReference type="KEGG" id="cel:CELE_F59C6.12"/>
<dbReference type="UCSC" id="F59C6.12">
    <property type="organism name" value="c. elegans"/>
</dbReference>
<dbReference type="AGR" id="WB:WBGene00044251"/>
<dbReference type="CTD" id="3565901"/>
<dbReference type="WormBase" id="F59C6.12">
    <property type="protein sequence ID" value="CE38380"/>
    <property type="gene ID" value="WBGene00044251"/>
</dbReference>
<dbReference type="eggNOG" id="ENOG502R8EE">
    <property type="taxonomic scope" value="Eukaryota"/>
</dbReference>
<dbReference type="GeneTree" id="ENSGT00390000011521"/>
<dbReference type="HOGENOM" id="CLU_069446_2_0_1"/>
<dbReference type="InParanoid" id="Q564X7"/>
<dbReference type="OMA" id="IKNFTSC"/>
<dbReference type="OrthoDB" id="10260024at2759"/>
<dbReference type="PhylomeDB" id="Q564X7"/>
<dbReference type="PRO" id="PR:Q564X7"/>
<dbReference type="Proteomes" id="UP000001940">
    <property type="component" value="Chromosome I"/>
</dbReference>
<dbReference type="Bgee" id="WBGene00044251">
    <property type="expression patterns" value="Expressed in adult organism and 3 other cell types or tissues"/>
</dbReference>
<dbReference type="InterPro" id="IPR028108">
    <property type="entry name" value="DUF4505"/>
</dbReference>
<dbReference type="PANTHER" id="PTHR31449">
    <property type="entry name" value="UPF0598 PROTEIN C8ORF82"/>
    <property type="match status" value="1"/>
</dbReference>
<dbReference type="PANTHER" id="PTHR31449:SF3">
    <property type="entry name" value="UPF0598 PROTEIN C8ORF82"/>
    <property type="match status" value="1"/>
</dbReference>
<dbReference type="Pfam" id="PF14956">
    <property type="entry name" value="DUF4505"/>
    <property type="match status" value="1"/>
</dbReference>